<sequence length="114" mass="13289">MADQYHEPVSELTGKDRDFVRALNSLKEEIEAVAWYHQRVVTTKDETVRKILEHNRDEEMEHAAMLLEWLRRNMPGWDEALRTYLFTDKPITEIEEETSGGSENTGGDLGIRKL</sequence>
<proteinExistence type="evidence at protein level"/>
<organism>
    <name type="scientific">Thermotoga maritima (strain ATCC 43589 / DSM 3109 / JCM 10099 / NBRC 100826 / MSB8)</name>
    <dbReference type="NCBI Taxonomy" id="243274"/>
    <lineage>
        <taxon>Bacteria</taxon>
        <taxon>Thermotogati</taxon>
        <taxon>Thermotogota</taxon>
        <taxon>Thermotogae</taxon>
        <taxon>Thermotogales</taxon>
        <taxon>Thermotogaceae</taxon>
        <taxon>Thermotoga</taxon>
    </lineage>
</organism>
<evidence type="ECO:0000250" key="1">
    <source>
        <dbReference type="UniProtKB" id="Q2RVS1"/>
    </source>
</evidence>
<evidence type="ECO:0000256" key="2">
    <source>
        <dbReference type="SAM" id="MobiDB-lite"/>
    </source>
</evidence>
<evidence type="ECO:0000269" key="3">
    <source>
    </source>
</evidence>
<evidence type="ECO:0000269" key="4">
    <source>
    </source>
</evidence>
<evidence type="ECO:0000269" key="5">
    <source>
    </source>
</evidence>
<evidence type="ECO:0000269" key="6">
    <source>
    </source>
</evidence>
<evidence type="ECO:0000269" key="7">
    <source>
    </source>
</evidence>
<evidence type="ECO:0000303" key="8">
    <source>
    </source>
</evidence>
<evidence type="ECO:0000305" key="9"/>
<evidence type="ECO:0000305" key="10">
    <source>
    </source>
</evidence>
<evidence type="ECO:0000305" key="11">
    <source>
    </source>
</evidence>
<evidence type="ECO:0007744" key="12">
    <source>
        <dbReference type="PDB" id="3DKT"/>
    </source>
</evidence>
<keyword id="KW-0002">3D-structure</keyword>
<keyword id="KW-1284">Encapsulin nanocompartment</keyword>
<keyword id="KW-0408">Iron</keyword>
<keyword id="KW-0409">Iron storage</keyword>
<keyword id="KW-0479">Metal-binding</keyword>
<keyword id="KW-1185">Reference proteome</keyword>
<feature type="chain" id="PRO_0000455324" description="Ferritin-like protein">
    <location>
        <begin position="1"/>
        <end position="114"/>
    </location>
</feature>
<feature type="region of interest" description="Cargo-loading peptide" evidence="4 5 6 10">
    <location>
        <begin position="86"/>
        <end position="114"/>
    </location>
</feature>
<feature type="region of interest" description="Disordered" evidence="2">
    <location>
        <begin position="94"/>
        <end position="114"/>
    </location>
</feature>
<feature type="compositionally biased region" description="Gly residues" evidence="2">
    <location>
        <begin position="103"/>
        <end position="114"/>
    </location>
</feature>
<feature type="binding site" evidence="1">
    <location>
        <position position="29"/>
    </location>
    <ligand>
        <name>Fe cation</name>
        <dbReference type="ChEBI" id="CHEBI:24875"/>
        <label>1</label>
    </ligand>
</feature>
<feature type="binding site" evidence="1">
    <location>
        <position position="29"/>
    </location>
    <ligand>
        <name>Fe cation</name>
        <dbReference type="ChEBI" id="CHEBI:24875"/>
        <label>2</label>
    </ligand>
</feature>
<feature type="binding site" evidence="1">
    <location>
        <position position="59"/>
    </location>
    <ligand>
        <name>Fe cation</name>
        <dbReference type="ChEBI" id="CHEBI:24875"/>
        <label>1</label>
    </ligand>
</feature>
<feature type="binding site" evidence="1">
    <location>
        <position position="59"/>
    </location>
    <ligand>
        <name>Fe cation</name>
        <dbReference type="ChEBI" id="CHEBI:24875"/>
        <label>2</label>
    </ligand>
</feature>
<feature type="binding site" evidence="1">
    <location>
        <position position="62"/>
    </location>
    <ligand>
        <name>Fe cation</name>
        <dbReference type="ChEBI" id="CHEBI:24875"/>
        <label>1</label>
    </ligand>
</feature>
<feature type="binding site" evidence="1">
    <location>
        <position position="62"/>
    </location>
    <ligand>
        <name>Fe cation</name>
        <dbReference type="ChEBI" id="CHEBI:24875"/>
        <label>2</label>
    </ligand>
</feature>
<accession>Q9WZP3</accession>
<accession>G4FD38</accession>
<dbReference type="EMBL" id="AE000512">
    <property type="protein sequence ID" value="AAD35868.1"/>
    <property type="molecule type" value="Genomic_DNA"/>
</dbReference>
<dbReference type="PIR" id="C72333">
    <property type="entry name" value="C72333"/>
</dbReference>
<dbReference type="RefSeq" id="NP_228595.1">
    <property type="nucleotide sequence ID" value="NC_000853.1"/>
</dbReference>
<dbReference type="RefSeq" id="WP_004080895.1">
    <property type="nucleotide sequence ID" value="NZ_CP011107.1"/>
</dbReference>
<dbReference type="PDB" id="3DKT">
    <property type="method" value="X-ray"/>
    <property type="resolution" value="3.10 A"/>
    <property type="chains" value="K/L/M/N/O/P/Q/R/S/T=106-113"/>
</dbReference>
<dbReference type="PDBsum" id="3DKT"/>
<dbReference type="SMR" id="Q9WZP3"/>
<dbReference type="IntAct" id="Q9WZP3">
    <property type="interactions" value="1"/>
</dbReference>
<dbReference type="PaxDb" id="243274-THEMA_00720"/>
<dbReference type="EnsemblBacteria" id="AAD35868">
    <property type="protein sequence ID" value="AAD35868"/>
    <property type="gene ID" value="TM_0786"/>
</dbReference>
<dbReference type="KEGG" id="tma:TM0786"/>
<dbReference type="KEGG" id="tmi:THEMA_00720"/>
<dbReference type="KEGG" id="tmm:Tmari_0787"/>
<dbReference type="KEGG" id="tmw:THMA_0805"/>
<dbReference type="PATRIC" id="fig|243274.17.peg.788"/>
<dbReference type="InParanoid" id="Q9WZP3"/>
<dbReference type="OrthoDB" id="9796238at2"/>
<dbReference type="EvolutionaryTrace" id="Q9WZP3"/>
<dbReference type="Proteomes" id="UP000008183">
    <property type="component" value="Chromosome"/>
</dbReference>
<dbReference type="GO" id="GO:0140737">
    <property type="term" value="C:encapsulin nanocompartment"/>
    <property type="evidence" value="ECO:0000314"/>
    <property type="project" value="UniProtKB"/>
</dbReference>
<dbReference type="GO" id="GO:0004322">
    <property type="term" value="F:ferroxidase activity"/>
    <property type="evidence" value="ECO:0007669"/>
    <property type="project" value="InterPro"/>
</dbReference>
<dbReference type="GO" id="GO:0046872">
    <property type="term" value="F:metal ion binding"/>
    <property type="evidence" value="ECO:0007669"/>
    <property type="project" value="UniProtKB-KW"/>
</dbReference>
<dbReference type="GO" id="GO:0006879">
    <property type="term" value="P:intracellular iron ion homeostasis"/>
    <property type="evidence" value="ECO:0007669"/>
    <property type="project" value="UniProtKB-KW"/>
</dbReference>
<dbReference type="Gene3D" id="6.10.140.1960">
    <property type="match status" value="1"/>
</dbReference>
<dbReference type="InterPro" id="IPR054581">
    <property type="entry name" value="EncFtn-like"/>
</dbReference>
<dbReference type="InterPro" id="IPR030907">
    <property type="entry name" value="Ferrit_encaps"/>
</dbReference>
<dbReference type="InterPro" id="IPR009078">
    <property type="entry name" value="Ferritin-like_SF"/>
</dbReference>
<dbReference type="NCBIfam" id="TIGR04535">
    <property type="entry name" value="ferrit_encaps"/>
    <property type="match status" value="1"/>
</dbReference>
<dbReference type="Pfam" id="PF22277">
    <property type="entry name" value="EncFtn-like"/>
    <property type="match status" value="1"/>
</dbReference>
<dbReference type="SUPFAM" id="SSF47240">
    <property type="entry name" value="Ferritin-like"/>
    <property type="match status" value="1"/>
</dbReference>
<name>FLP_THEMA</name>
<comment type="function">
    <text evidence="10">Cargo protein of a type 1 encapsulin nanocompartment. A ferritin-like protein that probably stores iron in the encapsulin nanocompartment.</text>
</comment>
<comment type="cofactor">
    <cofactor evidence="10">
        <name>Fe cation</name>
        <dbReference type="ChEBI" id="CHEBI:24875"/>
    </cofactor>
</comment>
<comment type="subunit">
    <text evidence="11">Probably forms a decamer which binds to the pentameric axis of the interior of the protein shell; as the Flp cargo protein is flexible, packing into the shell is not rigid. 3, 4 or 5 cargo decamers bind inside the encapulin nanocompartment (PubMed:34815415).</text>
</comment>
<comment type="subcellular location">
    <subcellularLocation>
        <location evidence="3 4 5 6 7">Encapsulin nanocompartment</location>
    </subcellularLocation>
</comment>
<comment type="domain">
    <text evidence="4 5 6 10">The C-terminal 15-30 residues (cargo loading-peptide, CLP, or targeting peptide) are sufficient to target this protein to the nanocompartment in vivo, while the C-terminal 5 residues suffice in vitro.</text>
</comment>
<comment type="biotechnology">
    <text evidence="4 5 6">The 15 or 30 C-terminal residues can be used to target foreign proteins to the nanocompartment.</text>
</comment>
<comment type="similarity">
    <text evidence="9">Belongs to the ferritin-like superfamily.</text>
</comment>
<gene>
    <name type="ordered locus">TM_0786</name>
</gene>
<protein>
    <recommendedName>
        <fullName evidence="8">Ferritin-like protein</fullName>
        <shortName evidence="8">Flp</shortName>
    </recommendedName>
    <alternativeName>
        <fullName>Encapsulin-associated ferritin-like protein</fullName>
    </alternativeName>
</protein>
<reference key="1">
    <citation type="journal article" date="1999" name="Nature">
        <title>Evidence for lateral gene transfer between Archaea and Bacteria from genome sequence of Thermotoga maritima.</title>
        <authorList>
            <person name="Nelson K.E."/>
            <person name="Clayton R.A."/>
            <person name="Gill S.R."/>
            <person name="Gwinn M.L."/>
            <person name="Dodson R.J."/>
            <person name="Haft D.H."/>
            <person name="Hickey E.K."/>
            <person name="Peterson J.D."/>
            <person name="Nelson W.C."/>
            <person name="Ketchum K.A."/>
            <person name="McDonald L.A."/>
            <person name="Utterback T.R."/>
            <person name="Malek J.A."/>
            <person name="Linher K.D."/>
            <person name="Garrett M.M."/>
            <person name="Stewart A.M."/>
            <person name="Cotton M.D."/>
            <person name="Pratt M.S."/>
            <person name="Phillips C.A."/>
            <person name="Richardson D.L."/>
            <person name="Heidelberg J.F."/>
            <person name="Sutton G.G."/>
            <person name="Fleischmann R.D."/>
            <person name="Eisen J.A."/>
            <person name="White O."/>
            <person name="Salzberg S.L."/>
            <person name="Smith H.O."/>
            <person name="Venter J.C."/>
            <person name="Fraser C.M."/>
        </authorList>
    </citation>
    <scope>NUCLEOTIDE SEQUENCE [LARGE SCALE GENOMIC DNA]</scope>
    <source>
        <strain>ATCC 43589 / DSM 3109 / JCM 10099 / NBRC 100826 / MSB8</strain>
    </source>
</reference>
<reference key="2">
    <citation type="journal article" date="2016" name="Biochemistry">
        <title>Identification of a Minimal Peptide Tag for in Vivo and in Vitro Loading of Encapsulin.</title>
        <authorList>
            <person name="Cassidy-Amstutz C."/>
            <person name="Oltrogge L."/>
            <person name="Going C.C."/>
            <person name="Lee A."/>
            <person name="Teng P."/>
            <person name="Quintanilla D."/>
            <person name="East-Seletsky A."/>
            <person name="Williams E.R."/>
            <person name="Savage D.F."/>
        </authorList>
    </citation>
    <scope>SUBCELLULAR LOCATION</scope>
    <scope>DOMAIN</scope>
    <scope>BIOTECHNOLOGY</scope>
    <source>
        <strain>ATCC 43589 / DSM 3109 / JCM 10099 / NBRC 100826 / MSB8</strain>
    </source>
</reference>
<reference key="3">
    <citation type="journal article" date="2018" name="ACS Synth. Biol.">
        <title>Pore Engineering for Enhanced Mass Transport in Encapsulin Nanocompartments.</title>
        <authorList>
            <person name="Williams E.M."/>
            <person name="Jung S.M."/>
            <person name="Coffman J.L."/>
            <person name="Lutz S."/>
        </authorList>
    </citation>
    <scope>SUBCELLULAR LOCATION</scope>
    <scope>DOMAIN</scope>
    <scope>BIOTECHNOLOGY</scope>
    <source>
        <strain>ATCC 43589 / DSM 3109 / JCM 10099 / NBRC 100826 / MSB8</strain>
    </source>
</reference>
<reference key="4">
    <citation type="journal article" date="2020" name="Biomolecules">
        <title>Cryo-EM Structure of Heterologous Protein Complex Loaded Thermotoga Maritima Encapsulin Capsid.</title>
        <authorList>
            <person name="Xiong X."/>
            <person name="Sun C."/>
            <person name="Vago F.S."/>
            <person name="Klose T."/>
            <person name="Zhu J."/>
            <person name="Jiang W."/>
        </authorList>
    </citation>
    <scope>SUBCELLULAR LOCATION</scope>
    <scope>DOMAIN</scope>
    <scope>BIOTECHNOLOGY</scope>
</reference>
<reference key="5">
    <citation type="journal article" date="2021" name="Sci. Rep.">
        <title>The encapsulin from Thermotoga maritima is a flavoprotein with a symmetry matched ferritin-like cargo protein.</title>
        <authorList>
            <person name="LaFrance B.J."/>
            <person name="Cassidy-Amstutz C."/>
            <person name="Nichols R.J."/>
            <person name="Oltrogge L.M."/>
            <person name="Nogales E."/>
            <person name="Savage D.F."/>
        </authorList>
    </citation>
    <scope>SUBUNIT</scope>
    <scope>SUBCELLULAR LOCATION</scope>
    <source>
        <strain>ATCC 43589 / DSM 3109 / JCM 10099 / NBRC 100826 / MSB8</strain>
    </source>
</reference>
<reference evidence="12" key="6">
    <citation type="journal article" date="2008" name="Nat. Struct. Mol. Biol.">
        <title>Structural basis of enzyme encapsulation into a bacterial nanocompartment.</title>
        <authorList>
            <person name="Sutter M."/>
            <person name="Boehringer D."/>
            <person name="Gutmann S."/>
            <person name="Gunther S."/>
            <person name="Prangishvili D."/>
            <person name="Loessner M.J."/>
            <person name="Stetter K.O."/>
            <person name="Weber-Ban E."/>
            <person name="Ban N."/>
        </authorList>
    </citation>
    <scope>X-RAY CRYSTALLOGRAPHY (3.10 ANGSTROMS) OF 106-113</scope>
    <scope>FUNCTION</scope>
    <scope>PROBABLE IRON COFACTOR</scope>
    <scope>SUBCELLULAR LOCATION</scope>
    <scope>DOMAIN</scope>
    <source>
        <strain>ATCC 43589 / DSM 3109 / JCM 10099 / NBRC 100826 / MSB8</strain>
    </source>
</reference>